<comment type="function">
    <text evidence="1">Involved in unsaturated fatty acids biosynthesis. Catalyzes the dehydration of short chain beta-hydroxyacyl-ACPs and long chain saturated and unsaturated beta-hydroxyacyl-ACPs.</text>
</comment>
<comment type="catalytic activity">
    <reaction evidence="1">
        <text>a (3R)-hydroxyacyl-[ACP] = a (2E)-enoyl-[ACP] + H2O</text>
        <dbReference type="Rhea" id="RHEA:13097"/>
        <dbReference type="Rhea" id="RHEA-COMP:9925"/>
        <dbReference type="Rhea" id="RHEA-COMP:9945"/>
        <dbReference type="ChEBI" id="CHEBI:15377"/>
        <dbReference type="ChEBI" id="CHEBI:78784"/>
        <dbReference type="ChEBI" id="CHEBI:78827"/>
        <dbReference type="EC" id="4.2.1.59"/>
    </reaction>
</comment>
<comment type="subcellular location">
    <subcellularLocation>
        <location evidence="1">Cytoplasm</location>
    </subcellularLocation>
</comment>
<comment type="similarity">
    <text evidence="1">Belongs to the thioester dehydratase family. FabZ subfamily.</text>
</comment>
<protein>
    <recommendedName>
        <fullName evidence="1">3-hydroxyacyl-[acyl-carrier-protein] dehydratase FabZ</fullName>
        <ecNumber evidence="1">4.2.1.59</ecNumber>
    </recommendedName>
    <alternativeName>
        <fullName evidence="1">(3R)-hydroxymyristoyl-[acyl-carrier-protein] dehydratase</fullName>
        <shortName evidence="1">(3R)-hydroxymyristoyl-ACP dehydrase</shortName>
    </alternativeName>
    <alternativeName>
        <fullName evidence="1">Beta-hydroxyacyl-ACP dehydratase</fullName>
    </alternativeName>
</protein>
<dbReference type="EC" id="4.2.1.59" evidence="1"/>
<dbReference type="EMBL" id="CP001348">
    <property type="protein sequence ID" value="ACL77389.1"/>
    <property type="molecule type" value="Genomic_DNA"/>
</dbReference>
<dbReference type="RefSeq" id="WP_015926447.1">
    <property type="nucleotide sequence ID" value="NC_011898.1"/>
</dbReference>
<dbReference type="SMR" id="B8I063"/>
<dbReference type="STRING" id="394503.Ccel_3097"/>
<dbReference type="KEGG" id="cce:Ccel_3097"/>
<dbReference type="eggNOG" id="COG0764">
    <property type="taxonomic scope" value="Bacteria"/>
</dbReference>
<dbReference type="HOGENOM" id="CLU_078912_3_0_9"/>
<dbReference type="OrthoDB" id="9772788at2"/>
<dbReference type="Proteomes" id="UP000001349">
    <property type="component" value="Chromosome"/>
</dbReference>
<dbReference type="GO" id="GO:0005737">
    <property type="term" value="C:cytoplasm"/>
    <property type="evidence" value="ECO:0007669"/>
    <property type="project" value="UniProtKB-SubCell"/>
</dbReference>
<dbReference type="GO" id="GO:0016020">
    <property type="term" value="C:membrane"/>
    <property type="evidence" value="ECO:0007669"/>
    <property type="project" value="GOC"/>
</dbReference>
<dbReference type="GO" id="GO:0019171">
    <property type="term" value="F:(3R)-hydroxyacyl-[acyl-carrier-protein] dehydratase activity"/>
    <property type="evidence" value="ECO:0007669"/>
    <property type="project" value="UniProtKB-EC"/>
</dbReference>
<dbReference type="GO" id="GO:0006633">
    <property type="term" value="P:fatty acid biosynthetic process"/>
    <property type="evidence" value="ECO:0007669"/>
    <property type="project" value="UniProtKB-UniRule"/>
</dbReference>
<dbReference type="GO" id="GO:0009245">
    <property type="term" value="P:lipid A biosynthetic process"/>
    <property type="evidence" value="ECO:0007669"/>
    <property type="project" value="UniProtKB-UniRule"/>
</dbReference>
<dbReference type="CDD" id="cd01288">
    <property type="entry name" value="FabZ"/>
    <property type="match status" value="1"/>
</dbReference>
<dbReference type="FunFam" id="3.10.129.10:FF:000001">
    <property type="entry name" value="3-hydroxyacyl-[acyl-carrier-protein] dehydratase FabZ"/>
    <property type="match status" value="1"/>
</dbReference>
<dbReference type="Gene3D" id="3.10.129.10">
    <property type="entry name" value="Hotdog Thioesterase"/>
    <property type="match status" value="1"/>
</dbReference>
<dbReference type="HAMAP" id="MF_00406">
    <property type="entry name" value="FabZ"/>
    <property type="match status" value="1"/>
</dbReference>
<dbReference type="InterPro" id="IPR013114">
    <property type="entry name" value="FabA_FabZ"/>
</dbReference>
<dbReference type="InterPro" id="IPR010084">
    <property type="entry name" value="FabZ"/>
</dbReference>
<dbReference type="InterPro" id="IPR029069">
    <property type="entry name" value="HotDog_dom_sf"/>
</dbReference>
<dbReference type="NCBIfam" id="TIGR01750">
    <property type="entry name" value="fabZ"/>
    <property type="match status" value="1"/>
</dbReference>
<dbReference type="NCBIfam" id="NF000582">
    <property type="entry name" value="PRK00006.1"/>
    <property type="match status" value="1"/>
</dbReference>
<dbReference type="PANTHER" id="PTHR30272">
    <property type="entry name" value="3-HYDROXYACYL-[ACYL-CARRIER-PROTEIN] DEHYDRATASE"/>
    <property type="match status" value="1"/>
</dbReference>
<dbReference type="PANTHER" id="PTHR30272:SF1">
    <property type="entry name" value="3-HYDROXYACYL-[ACYL-CARRIER-PROTEIN] DEHYDRATASE"/>
    <property type="match status" value="1"/>
</dbReference>
<dbReference type="Pfam" id="PF07977">
    <property type="entry name" value="FabA"/>
    <property type="match status" value="1"/>
</dbReference>
<dbReference type="SUPFAM" id="SSF54637">
    <property type="entry name" value="Thioesterase/thiol ester dehydrase-isomerase"/>
    <property type="match status" value="1"/>
</dbReference>
<sequence>MLTNKEIRELLPHRYPFLLVDKVIELEPGKKVVAVKNVSANEPFFQGHFPEYPIMPGVLIVEALAQAAGIAVAVLEDNKGKLGVFAGIEAMKFKNQVMPGDVLTLEAEILVSKLGVTKAKVKASVDGKVAAEGEIKFAMTKA</sequence>
<accession>B8I063</accession>
<proteinExistence type="inferred from homology"/>
<gene>
    <name evidence="1" type="primary">fabZ</name>
    <name type="ordered locus">Ccel_3097</name>
</gene>
<evidence type="ECO:0000255" key="1">
    <source>
        <dbReference type="HAMAP-Rule" id="MF_00406"/>
    </source>
</evidence>
<keyword id="KW-0963">Cytoplasm</keyword>
<keyword id="KW-0441">Lipid A biosynthesis</keyword>
<keyword id="KW-0444">Lipid biosynthesis</keyword>
<keyword id="KW-0443">Lipid metabolism</keyword>
<keyword id="KW-0456">Lyase</keyword>
<keyword id="KW-1185">Reference proteome</keyword>
<feature type="chain" id="PRO_1000134697" description="3-hydroxyacyl-[acyl-carrier-protein] dehydratase FabZ">
    <location>
        <begin position="1"/>
        <end position="142"/>
    </location>
</feature>
<feature type="active site" evidence="1">
    <location>
        <position position="48"/>
    </location>
</feature>
<reference key="1">
    <citation type="submission" date="2009-01" db="EMBL/GenBank/DDBJ databases">
        <title>Complete sequence of Clostridium cellulolyticum H10.</title>
        <authorList>
            <consortium name="US DOE Joint Genome Institute"/>
            <person name="Lucas S."/>
            <person name="Copeland A."/>
            <person name="Lapidus A."/>
            <person name="Glavina del Rio T."/>
            <person name="Dalin E."/>
            <person name="Tice H."/>
            <person name="Bruce D."/>
            <person name="Goodwin L."/>
            <person name="Pitluck S."/>
            <person name="Chertkov O."/>
            <person name="Saunders E."/>
            <person name="Brettin T."/>
            <person name="Detter J.C."/>
            <person name="Han C."/>
            <person name="Larimer F."/>
            <person name="Land M."/>
            <person name="Hauser L."/>
            <person name="Kyrpides N."/>
            <person name="Ivanova N."/>
            <person name="Zhou J."/>
            <person name="Richardson P."/>
        </authorList>
    </citation>
    <scope>NUCLEOTIDE SEQUENCE [LARGE SCALE GENOMIC DNA]</scope>
    <source>
        <strain>ATCC 35319 / DSM 5812 / JCM 6584 / H10</strain>
    </source>
</reference>
<name>FABZ_RUMCH</name>
<organism>
    <name type="scientific">Ruminiclostridium cellulolyticum (strain ATCC 35319 / DSM 5812 / JCM 6584 / H10)</name>
    <name type="common">Clostridium cellulolyticum</name>
    <dbReference type="NCBI Taxonomy" id="394503"/>
    <lineage>
        <taxon>Bacteria</taxon>
        <taxon>Bacillati</taxon>
        <taxon>Bacillota</taxon>
        <taxon>Clostridia</taxon>
        <taxon>Eubacteriales</taxon>
        <taxon>Oscillospiraceae</taxon>
        <taxon>Ruminiclostridium</taxon>
    </lineage>
</organism>